<name>CCD38_MOUSE</name>
<dbReference type="EMBL" id="AK029803">
    <property type="protein sequence ID" value="BAC26623.1"/>
    <property type="molecule type" value="mRNA"/>
</dbReference>
<dbReference type="EMBL" id="AK030198">
    <property type="protein sequence ID" value="BAC26836.1"/>
    <property type="molecule type" value="mRNA"/>
</dbReference>
<dbReference type="EMBL" id="AK030205">
    <property type="protein sequence ID" value="BAC26841.1"/>
    <property type="molecule type" value="mRNA"/>
</dbReference>
<dbReference type="CCDS" id="CCDS24127.1">
    <molecule id="Q8CDN8-1"/>
</dbReference>
<dbReference type="CCDS" id="CCDS88074.1">
    <molecule id="Q8CDN8-2"/>
</dbReference>
<dbReference type="RefSeq" id="NP_001346678.1">
    <molecule id="Q8CDN8-2"/>
    <property type="nucleotide sequence ID" value="NM_001359749.1"/>
</dbReference>
<dbReference type="RefSeq" id="NP_780697.2">
    <molecule id="Q8CDN8-1"/>
    <property type="nucleotide sequence ID" value="NM_175488.6"/>
</dbReference>
<dbReference type="RefSeq" id="XP_006513692.1">
    <property type="nucleotide sequence ID" value="XM_006513629.2"/>
</dbReference>
<dbReference type="SMR" id="Q8CDN8"/>
<dbReference type="FunCoup" id="Q8CDN8">
    <property type="interactions" value="53"/>
</dbReference>
<dbReference type="STRING" id="10090.ENSMUSP00000089860"/>
<dbReference type="PhosphoSitePlus" id="Q8CDN8"/>
<dbReference type="PaxDb" id="10090-ENSMUSP00000089860"/>
<dbReference type="ProteomicsDB" id="265362">
    <molecule id="Q8CDN8-1"/>
</dbReference>
<dbReference type="ProteomicsDB" id="265363">
    <molecule id="Q8CDN8-2"/>
</dbReference>
<dbReference type="Antibodypedia" id="49794">
    <property type="antibodies" value="111 antibodies from 16 providers"/>
</dbReference>
<dbReference type="DNASU" id="237465"/>
<dbReference type="Ensembl" id="ENSMUST00000092215.6">
    <molecule id="Q8CDN8-1"/>
    <property type="protein sequence ID" value="ENSMUSP00000089860.6"/>
    <property type="gene ID" value="ENSMUSG00000036168.16"/>
</dbReference>
<dbReference type="Ensembl" id="ENSMUST00000132214.8">
    <molecule id="Q8CDN8-2"/>
    <property type="protein sequence ID" value="ENSMUSP00000150407.2"/>
    <property type="gene ID" value="ENSMUSG00000036168.16"/>
</dbReference>
<dbReference type="GeneID" id="237465"/>
<dbReference type="KEGG" id="mmu:237465"/>
<dbReference type="UCSC" id="uc007guu.1">
    <molecule id="Q8CDN8-1"/>
    <property type="organism name" value="mouse"/>
</dbReference>
<dbReference type="UCSC" id="uc007guv.1">
    <molecule id="Q8CDN8-2"/>
    <property type="organism name" value="mouse"/>
</dbReference>
<dbReference type="AGR" id="MGI:2444738"/>
<dbReference type="CTD" id="120935"/>
<dbReference type="MGI" id="MGI:2444738">
    <property type="gene designation" value="Ccdc38"/>
</dbReference>
<dbReference type="VEuPathDB" id="HostDB:ENSMUSG00000036168"/>
<dbReference type="eggNOG" id="ENOG502QSDI">
    <property type="taxonomic scope" value="Eukaryota"/>
</dbReference>
<dbReference type="GeneTree" id="ENSGT00940000153110"/>
<dbReference type="HOGENOM" id="CLU_026271_1_0_1"/>
<dbReference type="InParanoid" id="Q8CDN8"/>
<dbReference type="OMA" id="HSKPPSG"/>
<dbReference type="OrthoDB" id="10264063at2759"/>
<dbReference type="PhylomeDB" id="Q8CDN8"/>
<dbReference type="TreeFam" id="TF328835"/>
<dbReference type="BioGRID-ORCS" id="237465">
    <property type="hits" value="3 hits in 78 CRISPR screens"/>
</dbReference>
<dbReference type="ChiTaRS" id="Ccdc38">
    <property type="organism name" value="mouse"/>
</dbReference>
<dbReference type="PRO" id="PR:Q8CDN8"/>
<dbReference type="Proteomes" id="UP000000589">
    <property type="component" value="Chromosome 10"/>
</dbReference>
<dbReference type="RNAct" id="Q8CDN8">
    <property type="molecule type" value="protein"/>
</dbReference>
<dbReference type="Bgee" id="ENSMUSG00000036168">
    <property type="expression patterns" value="Expressed in spermatocyte and 56 other cell types or tissues"/>
</dbReference>
<dbReference type="GO" id="GO:0005813">
    <property type="term" value="C:centrosome"/>
    <property type="evidence" value="ECO:0000250"/>
    <property type="project" value="UniProtKB"/>
</dbReference>
<dbReference type="GO" id="GO:0002177">
    <property type="term" value="C:manchette"/>
    <property type="evidence" value="ECO:0000314"/>
    <property type="project" value="MGI"/>
</dbReference>
<dbReference type="GO" id="GO:0048471">
    <property type="term" value="C:perinuclear region of cytoplasm"/>
    <property type="evidence" value="ECO:0000314"/>
    <property type="project" value="MGI"/>
</dbReference>
<dbReference type="GO" id="GO:0036126">
    <property type="term" value="C:sperm flagellum"/>
    <property type="evidence" value="ECO:0000314"/>
    <property type="project" value="MGI"/>
</dbReference>
<dbReference type="GO" id="GO:0061827">
    <property type="term" value="C:sperm head"/>
    <property type="evidence" value="ECO:0000314"/>
    <property type="project" value="MGI"/>
</dbReference>
<dbReference type="GO" id="GO:0061649">
    <property type="term" value="F:ubiquitin-modified histone reader activity"/>
    <property type="evidence" value="ECO:0000314"/>
    <property type="project" value="UniProtKB"/>
</dbReference>
<dbReference type="GO" id="GO:0001675">
    <property type="term" value="P:acrosome assembly"/>
    <property type="evidence" value="ECO:0000315"/>
    <property type="project" value="UniProtKB"/>
</dbReference>
<dbReference type="GO" id="GO:0035720">
    <property type="term" value="P:intraciliary anterograde transport"/>
    <property type="evidence" value="ECO:0000315"/>
    <property type="project" value="MGI"/>
</dbReference>
<dbReference type="GO" id="GO:0120316">
    <property type="term" value="P:sperm flagellum assembly"/>
    <property type="evidence" value="ECO:0000315"/>
    <property type="project" value="UniProtKB"/>
</dbReference>
<dbReference type="GO" id="GO:0007283">
    <property type="term" value="P:spermatogenesis"/>
    <property type="evidence" value="ECO:0000315"/>
    <property type="project" value="MGI"/>
</dbReference>
<dbReference type="InterPro" id="IPR051147">
    <property type="entry name" value="CFAP_domain-containing"/>
</dbReference>
<dbReference type="InterPro" id="IPR025252">
    <property type="entry name" value="DUF4200"/>
</dbReference>
<dbReference type="PANTHER" id="PTHR21683:SF7">
    <property type="entry name" value="COILED-COIL DOMAIN-CONTAINING PROTEIN 38"/>
    <property type="match status" value="1"/>
</dbReference>
<dbReference type="PANTHER" id="PTHR21683">
    <property type="entry name" value="COILED-COIL DOMAIN-CONTAINING PROTEIN 42 LIKE-2-LIKE-RELATED"/>
    <property type="match status" value="1"/>
</dbReference>
<dbReference type="Pfam" id="PF13863">
    <property type="entry name" value="DUF4200"/>
    <property type="match status" value="1"/>
</dbReference>
<feature type="chain" id="PRO_0000234492" description="Coiled-coil domain-containing protein 38">
    <location>
        <begin position="1"/>
        <end position="563"/>
    </location>
</feature>
<feature type="region of interest" description="Disordered" evidence="3">
    <location>
        <begin position="265"/>
        <end position="310"/>
    </location>
</feature>
<feature type="region of interest" description="Disordered" evidence="3">
    <location>
        <begin position="543"/>
        <end position="563"/>
    </location>
</feature>
<feature type="coiled-coil region" evidence="2">
    <location>
        <begin position="128"/>
        <end position="211"/>
    </location>
</feature>
<feature type="coiled-coil region" evidence="2">
    <location>
        <begin position="361"/>
        <end position="415"/>
    </location>
</feature>
<feature type="coiled-coil region" evidence="2">
    <location>
        <begin position="454"/>
        <end position="522"/>
    </location>
</feature>
<feature type="compositionally biased region" description="Basic and acidic residues" evidence="3">
    <location>
        <begin position="269"/>
        <end position="281"/>
    </location>
</feature>
<feature type="splice variant" id="VSP_018331" description="In isoform 2." evidence="8">
    <location>
        <begin position="2"/>
        <end position="101"/>
    </location>
</feature>
<feature type="splice variant" id="VSP_018332" description="In isoform 2." evidence="8">
    <original>Q</original>
    <variation>QKQAILRQEPTWKAIYFAEKFIEFLLRSISQPVAKKDPFHLPKYIIYQLKRLQNQVKHRSGE</variation>
    <location>
        <position position="426"/>
    </location>
</feature>
<feature type="sequence conflict" description="In Ref. 1; BAC26836." evidence="9" ref="1">
    <original>L</original>
    <variation>V</variation>
    <location>
        <position position="91"/>
    </location>
</feature>
<feature type="sequence conflict" description="In Ref. 1; BAC26836." evidence="9" ref="1">
    <original>R</original>
    <variation>S</variation>
    <location>
        <position position="107"/>
    </location>
</feature>
<feature type="sequence conflict" description="In Ref. 1; BAC26836." evidence="9" ref="1">
    <original>A</original>
    <variation>S</variation>
    <location>
        <position position="448"/>
    </location>
</feature>
<comment type="function">
    <text evidence="5 6">Essential for male fertility (PubMed:35587122, PubMed:37709195). Required for sperm flagellum biogenesis (PubMed:35587122, PubMed:37709195). Also required for acrosome biogenesis (PubMed:37709195). Required for the attachment of developing acrosomes to the nucleus during spermiogenesis and may be involved in the transport of fibrous sheath components (PubMed:37709195).</text>
</comment>
<comment type="subunit">
    <text evidence="4 5 6 7">Interacts with CCDC42, CFAP53, IFT88 and ODF2 (PubMed:35587122). Interacts with CCDC146 (PubMed:38038747). Interacts with TEKT3 (PubMed:37709195). Interacts with ubiquitinated histone H2A (PubMed:27278724).</text>
</comment>
<comment type="subcellular location">
    <subcellularLocation>
        <location evidence="1">Cytoplasm</location>
        <location evidence="1">Cytoskeleton</location>
        <location evidence="1">Microtubule organizing center</location>
        <location evidence="1">Centrosome</location>
    </subcellularLocation>
    <subcellularLocation>
        <location evidence="5">Cytoplasm</location>
        <location evidence="5">Perinuclear region</location>
    </subcellularLocation>
    <subcellularLocation>
        <location evidence="5">Cell projection</location>
        <location evidence="5">Cilium</location>
        <location evidence="5">Flagellum</location>
    </subcellularLocation>
    <subcellularLocation>
        <location evidence="5">Cytoplasm</location>
        <location evidence="5">Cytoskeleton</location>
    </subcellularLocation>
    <text evidence="5">Localizes to the sperm flagellum, manchette and the perinuclear region of the sperm head.</text>
</comment>
<comment type="alternative products">
    <event type="alternative splicing"/>
    <isoform>
        <id>Q8CDN8-1</id>
        <name>1</name>
        <sequence type="displayed"/>
    </isoform>
    <isoform>
        <id>Q8CDN8-2</id>
        <name>2</name>
        <sequence type="described" ref="VSP_018331 VSP_018332"/>
    </isoform>
</comment>
<comment type="tissue specificity">
    <text evidence="4 5 6">Expressed exclusively in testis where it is detected mainly in spermatogonia and spermatocytes (at protein level).</text>
</comment>
<comment type="developmental stage">
    <text evidence="4 5 6">During postnatal testis development, expression is low at weeks 1 and 2, increases between weeks 2 and 8 with a peak at postnatal day 35 and then levels off.</text>
</comment>
<comment type="disruption phenotype">
    <text evidence="5 6">Mutant males are infertile (PubMed:35587122, PubMed:37709195). They exhibit normal mounting behaviors and produce coital plugs but fail to produce any offspring after mating with wild-type adult females (PubMed:35587122, PubMed:37709195). Significantly reduced sperm count and motility with spermatozoa displaying morphological abnormalities including short or absent flagella, abnormal nuclei, disordered filaments, abnormally long manchettes and abnormal sperm heads (PubMed:35587122, PubMed:37709195). Impaired fibrous sheaths and disorganized axonemes in sperm flagella (PubMed:37709195). Sperm heads display acrosomal dysplasia (PubMed:37709195). Significantly reduced levels of Cfap53, Ift88, Ift20 and Odf2 in the testis (PubMed:35587122). Significantly decreased levels of Tekt3, Tssk6, Bsg, Akap3 and Cabyr in the testis (PubMed:37709195). Mislocalization of Odf2 with no expression detected in the sperm flagellum (PubMed:35587122). Aberrant localization of Tekt3, Akap3 and Cabyr (PubMed:37709195). Testis size and ratio of testis weight to body weight are unaffected (PubMed:35587122, PubMed:37709195). Fertility of knockout females is normal (PubMed:35587122).</text>
</comment>
<protein>
    <recommendedName>
        <fullName>Coiled-coil domain-containing protein 38</fullName>
    </recommendedName>
</protein>
<proteinExistence type="evidence at protein level"/>
<evidence type="ECO:0000250" key="1">
    <source>
        <dbReference type="UniProtKB" id="Q502W7"/>
    </source>
</evidence>
<evidence type="ECO:0000255" key="2"/>
<evidence type="ECO:0000256" key="3">
    <source>
        <dbReference type="SAM" id="MobiDB-lite"/>
    </source>
</evidence>
<evidence type="ECO:0000269" key="4">
    <source>
    </source>
</evidence>
<evidence type="ECO:0000269" key="5">
    <source>
    </source>
</evidence>
<evidence type="ECO:0000269" key="6">
    <source>
    </source>
</evidence>
<evidence type="ECO:0000269" key="7">
    <source>
    </source>
</evidence>
<evidence type="ECO:0000303" key="8">
    <source>
    </source>
</evidence>
<evidence type="ECO:0000305" key="9"/>
<sequence>MASQMHTSISSGDEGKDAVLKKERPYKIFFKDLFVFKENEIAARKKERMKNHSMKIYQKTTFSSRMKSRSHLGQLAFFADAGSSSYERLGLDPTLILRLTEGADRKRTVHEFINDQRDRFLLEYTVSTKKKTIKRFERLIAIKENQLKKAEKKLQDDALSFEEFLRENDQRSVDALKMAAQETINKLQMTSELKKASMEVQSIKSDIAKTEFLLKEYMKYGFFLLKLSPKQWQIQQSQKRAQSSKSNHILPKILEKFSINTAKGDNSIDSDKMSVSEEWSSRRGSQGGRHGKHTLGQDSRKSSGFTRPESMASEDSLEYFLEDELVEFDLLPEIYFKEPEELLQVFTELEEQNLTLVQYSQDVDENLEDVNKREKFIQDKINNNISFLLEHKHMLRMNCEREEEKAAELELRSRLFSFGEFNSDAQEKLIDSLSKKINQVYRVCIGDAEVGSLNAVQKLVKVESRLVELSDLIESIPREHVEAIERLKQKERRQKLREEKMKEKQRHQEERLKAALERAVAQPKKKLGRRLIYRSKPQSADKQELLLVSDTRSKSQDEEYFFS</sequence>
<accession>Q8CDN8</accession>
<accession>Q8CDD6</accession>
<accession>Q8CDE1</accession>
<keyword id="KW-0025">Alternative splicing</keyword>
<keyword id="KW-0966">Cell projection</keyword>
<keyword id="KW-0969">Cilium</keyword>
<keyword id="KW-0175">Coiled coil</keyword>
<keyword id="KW-0963">Cytoplasm</keyword>
<keyword id="KW-0206">Cytoskeleton</keyword>
<keyword id="KW-0221">Differentiation</keyword>
<keyword id="KW-0282">Flagellum</keyword>
<keyword id="KW-1185">Reference proteome</keyword>
<keyword id="KW-0744">Spermatogenesis</keyword>
<gene>
    <name type="primary">Ccdc38</name>
</gene>
<organism>
    <name type="scientific">Mus musculus</name>
    <name type="common">Mouse</name>
    <dbReference type="NCBI Taxonomy" id="10090"/>
    <lineage>
        <taxon>Eukaryota</taxon>
        <taxon>Metazoa</taxon>
        <taxon>Chordata</taxon>
        <taxon>Craniata</taxon>
        <taxon>Vertebrata</taxon>
        <taxon>Euteleostomi</taxon>
        <taxon>Mammalia</taxon>
        <taxon>Eutheria</taxon>
        <taxon>Euarchontoglires</taxon>
        <taxon>Glires</taxon>
        <taxon>Rodentia</taxon>
        <taxon>Myomorpha</taxon>
        <taxon>Muroidea</taxon>
        <taxon>Muridae</taxon>
        <taxon>Murinae</taxon>
        <taxon>Mus</taxon>
        <taxon>Mus</taxon>
    </lineage>
</organism>
<reference key="1">
    <citation type="journal article" date="2005" name="Science">
        <title>The transcriptional landscape of the mammalian genome.</title>
        <authorList>
            <person name="Carninci P."/>
            <person name="Kasukawa T."/>
            <person name="Katayama S."/>
            <person name="Gough J."/>
            <person name="Frith M.C."/>
            <person name="Maeda N."/>
            <person name="Oyama R."/>
            <person name="Ravasi T."/>
            <person name="Lenhard B."/>
            <person name="Wells C."/>
            <person name="Kodzius R."/>
            <person name="Shimokawa K."/>
            <person name="Bajic V.B."/>
            <person name="Brenner S.E."/>
            <person name="Batalov S."/>
            <person name="Forrest A.R."/>
            <person name="Zavolan M."/>
            <person name="Davis M.J."/>
            <person name="Wilming L.G."/>
            <person name="Aidinis V."/>
            <person name="Allen J.E."/>
            <person name="Ambesi-Impiombato A."/>
            <person name="Apweiler R."/>
            <person name="Aturaliya R.N."/>
            <person name="Bailey T.L."/>
            <person name="Bansal M."/>
            <person name="Baxter L."/>
            <person name="Beisel K.W."/>
            <person name="Bersano T."/>
            <person name="Bono H."/>
            <person name="Chalk A.M."/>
            <person name="Chiu K.P."/>
            <person name="Choudhary V."/>
            <person name="Christoffels A."/>
            <person name="Clutterbuck D.R."/>
            <person name="Crowe M.L."/>
            <person name="Dalla E."/>
            <person name="Dalrymple B.P."/>
            <person name="de Bono B."/>
            <person name="Della Gatta G."/>
            <person name="di Bernardo D."/>
            <person name="Down T."/>
            <person name="Engstrom P."/>
            <person name="Fagiolini M."/>
            <person name="Faulkner G."/>
            <person name="Fletcher C.F."/>
            <person name="Fukushima T."/>
            <person name="Furuno M."/>
            <person name="Futaki S."/>
            <person name="Gariboldi M."/>
            <person name="Georgii-Hemming P."/>
            <person name="Gingeras T.R."/>
            <person name="Gojobori T."/>
            <person name="Green R.E."/>
            <person name="Gustincich S."/>
            <person name="Harbers M."/>
            <person name="Hayashi Y."/>
            <person name="Hensch T.K."/>
            <person name="Hirokawa N."/>
            <person name="Hill D."/>
            <person name="Huminiecki L."/>
            <person name="Iacono M."/>
            <person name="Ikeo K."/>
            <person name="Iwama A."/>
            <person name="Ishikawa T."/>
            <person name="Jakt M."/>
            <person name="Kanapin A."/>
            <person name="Katoh M."/>
            <person name="Kawasawa Y."/>
            <person name="Kelso J."/>
            <person name="Kitamura H."/>
            <person name="Kitano H."/>
            <person name="Kollias G."/>
            <person name="Krishnan S.P."/>
            <person name="Kruger A."/>
            <person name="Kummerfeld S.K."/>
            <person name="Kurochkin I.V."/>
            <person name="Lareau L.F."/>
            <person name="Lazarevic D."/>
            <person name="Lipovich L."/>
            <person name="Liu J."/>
            <person name="Liuni S."/>
            <person name="McWilliam S."/>
            <person name="Madan Babu M."/>
            <person name="Madera M."/>
            <person name="Marchionni L."/>
            <person name="Matsuda H."/>
            <person name="Matsuzawa S."/>
            <person name="Miki H."/>
            <person name="Mignone F."/>
            <person name="Miyake S."/>
            <person name="Morris K."/>
            <person name="Mottagui-Tabar S."/>
            <person name="Mulder N."/>
            <person name="Nakano N."/>
            <person name="Nakauchi H."/>
            <person name="Ng P."/>
            <person name="Nilsson R."/>
            <person name="Nishiguchi S."/>
            <person name="Nishikawa S."/>
            <person name="Nori F."/>
            <person name="Ohara O."/>
            <person name="Okazaki Y."/>
            <person name="Orlando V."/>
            <person name="Pang K.C."/>
            <person name="Pavan W.J."/>
            <person name="Pavesi G."/>
            <person name="Pesole G."/>
            <person name="Petrovsky N."/>
            <person name="Piazza S."/>
            <person name="Reed J."/>
            <person name="Reid J.F."/>
            <person name="Ring B.Z."/>
            <person name="Ringwald M."/>
            <person name="Rost B."/>
            <person name="Ruan Y."/>
            <person name="Salzberg S.L."/>
            <person name="Sandelin A."/>
            <person name="Schneider C."/>
            <person name="Schoenbach C."/>
            <person name="Sekiguchi K."/>
            <person name="Semple C.A."/>
            <person name="Seno S."/>
            <person name="Sessa L."/>
            <person name="Sheng Y."/>
            <person name="Shibata Y."/>
            <person name="Shimada H."/>
            <person name="Shimada K."/>
            <person name="Silva D."/>
            <person name="Sinclair B."/>
            <person name="Sperling S."/>
            <person name="Stupka E."/>
            <person name="Sugiura K."/>
            <person name="Sultana R."/>
            <person name="Takenaka Y."/>
            <person name="Taki K."/>
            <person name="Tammoja K."/>
            <person name="Tan S.L."/>
            <person name="Tang S."/>
            <person name="Taylor M.S."/>
            <person name="Tegner J."/>
            <person name="Teichmann S.A."/>
            <person name="Ueda H.R."/>
            <person name="van Nimwegen E."/>
            <person name="Verardo R."/>
            <person name="Wei C.L."/>
            <person name="Yagi K."/>
            <person name="Yamanishi H."/>
            <person name="Zabarovsky E."/>
            <person name="Zhu S."/>
            <person name="Zimmer A."/>
            <person name="Hide W."/>
            <person name="Bult C."/>
            <person name="Grimmond S.M."/>
            <person name="Teasdale R.D."/>
            <person name="Liu E.T."/>
            <person name="Brusic V."/>
            <person name="Quackenbush J."/>
            <person name="Wahlestedt C."/>
            <person name="Mattick J.S."/>
            <person name="Hume D.A."/>
            <person name="Kai C."/>
            <person name="Sasaki D."/>
            <person name="Tomaru Y."/>
            <person name="Fukuda S."/>
            <person name="Kanamori-Katayama M."/>
            <person name="Suzuki M."/>
            <person name="Aoki J."/>
            <person name="Arakawa T."/>
            <person name="Iida J."/>
            <person name="Imamura K."/>
            <person name="Itoh M."/>
            <person name="Kato T."/>
            <person name="Kawaji H."/>
            <person name="Kawagashira N."/>
            <person name="Kawashima T."/>
            <person name="Kojima M."/>
            <person name="Kondo S."/>
            <person name="Konno H."/>
            <person name="Nakano K."/>
            <person name="Ninomiya N."/>
            <person name="Nishio T."/>
            <person name="Okada M."/>
            <person name="Plessy C."/>
            <person name="Shibata K."/>
            <person name="Shiraki T."/>
            <person name="Suzuki S."/>
            <person name="Tagami M."/>
            <person name="Waki K."/>
            <person name="Watahiki A."/>
            <person name="Okamura-Oho Y."/>
            <person name="Suzuki H."/>
            <person name="Kawai J."/>
            <person name="Hayashizaki Y."/>
        </authorList>
    </citation>
    <scope>NUCLEOTIDE SEQUENCE [LARGE SCALE MRNA] (ISOFORMS 1 AND 2)</scope>
    <source>
        <strain>C57BL/6J</strain>
        <tissue>Testis</tissue>
    </source>
</reference>
<reference key="2">
    <citation type="journal article" date="2016" name="Mol. Med. Report.">
        <title>Identification and characteristics of the testes-specific gene, Ccdc38, in mice.</title>
        <authorList>
            <person name="Lin S.R."/>
            <person name="Li Y.C."/>
            <person name="Luo M.L."/>
            <person name="Guo H."/>
            <person name="Wang T.T."/>
            <person name="Chen J.B."/>
            <person name="Ma Q."/>
            <person name="Gu Y.L."/>
            <person name="Jiang Z.M."/>
            <person name="Gui Y.T."/>
        </authorList>
    </citation>
    <scope>INTERACTION WITH HISTONE H2A</scope>
    <scope>TISSUE SPECIFICITY</scope>
    <scope>DEVELOPMENTAL STAGE</scope>
</reference>
<reference key="3">
    <citation type="journal article" date="2022" name="Development">
        <title>CCDC38 is required for sperm flagellum biogenesis and male fertility in mice.</title>
        <authorList>
            <person name="Zhang R."/>
            <person name="Wu B."/>
            <person name="Liu C."/>
            <person name="Zhang Z."/>
            <person name="Wang X."/>
            <person name="Wang L."/>
            <person name="Xiao S."/>
            <person name="Chen Y."/>
            <person name="Wei H."/>
            <person name="Jiang H."/>
            <person name="Gao F."/>
            <person name="Yuan L."/>
            <person name="Li W."/>
        </authorList>
    </citation>
    <scope>FUNCTION</scope>
    <scope>INTERACTION WITH CCDC42; CFAP53; IFT88 AND ODF2</scope>
    <scope>SUBCELLULAR LOCATION</scope>
    <scope>TISSUE SPECIFICITY</scope>
    <scope>DEVELOPMENTAL STAGE</scope>
    <scope>DISRUPTION PHENOTYPE</scope>
</reference>
<reference key="4">
    <citation type="journal article" date="2023" name="Cell. Mol. Life Sci.">
        <title>CCDC146 is required for sperm flagellum biogenesis and male fertility in mice.</title>
        <authorList>
            <person name="Ma Y."/>
            <person name="Wu B."/>
            <person name="Chen Y."/>
            <person name="Ma S."/>
            <person name="Wang L."/>
            <person name="Han T."/>
            <person name="Lin X."/>
            <person name="Yang F."/>
            <person name="Liu C."/>
            <person name="Zhao J."/>
            <person name="Li W."/>
        </authorList>
    </citation>
    <scope>INTERACTION WITH CCDC146</scope>
</reference>
<reference key="5">
    <citation type="journal article" date="2023" name="J. Genet. Genomics">
        <title>Coiled-coil domain-containing 38 is required for acrosome biogenesis and fibrous sheath assembly in mice.</title>
        <authorList>
            <person name="Wang Y."/>
            <person name="Huang X."/>
            <person name="Sun G."/>
            <person name="Chen J."/>
            <person name="Wu B."/>
            <person name="Luo J."/>
            <person name="Tang S."/>
            <person name="Dai P."/>
            <person name="Zhang F."/>
            <person name="Li J."/>
            <person name="Wang L."/>
        </authorList>
    </citation>
    <scope>FUNCTION</scope>
    <scope>INTERACTION WITH TEKT3</scope>
    <scope>TISSUE SPECIFICITY</scope>
    <scope>DEVELOPMENTAL STAGE</scope>
    <scope>DISRUPTION PHENOTYPE</scope>
</reference>